<evidence type="ECO:0000255" key="1">
    <source>
        <dbReference type="HAMAP-Rule" id="MF_00636"/>
    </source>
</evidence>
<organism>
    <name type="scientific">Pseudoalteromonas atlantica (strain T6c / ATCC BAA-1087)</name>
    <dbReference type="NCBI Taxonomy" id="3042615"/>
    <lineage>
        <taxon>Bacteria</taxon>
        <taxon>Pseudomonadati</taxon>
        <taxon>Pseudomonadota</taxon>
        <taxon>Gammaproteobacteria</taxon>
        <taxon>Alteromonadales</taxon>
        <taxon>Alteromonadaceae</taxon>
        <taxon>Paraglaciecola</taxon>
    </lineage>
</organism>
<comment type="function">
    <text evidence="1">Displays ATPase and GTPase activities.</text>
</comment>
<comment type="similarity">
    <text evidence="1">Belongs to the RapZ-like family.</text>
</comment>
<feature type="chain" id="PRO_1000056843" description="Nucleotide-binding protein Patl_0571">
    <location>
        <begin position="1"/>
        <end position="281"/>
    </location>
</feature>
<feature type="binding site" evidence="1">
    <location>
        <begin position="8"/>
        <end position="15"/>
    </location>
    <ligand>
        <name>ATP</name>
        <dbReference type="ChEBI" id="CHEBI:30616"/>
    </ligand>
</feature>
<feature type="binding site" evidence="1">
    <location>
        <begin position="56"/>
        <end position="59"/>
    </location>
    <ligand>
        <name>GTP</name>
        <dbReference type="ChEBI" id="CHEBI:37565"/>
    </ligand>
</feature>
<protein>
    <recommendedName>
        <fullName evidence="1">Nucleotide-binding protein Patl_0571</fullName>
    </recommendedName>
</protein>
<gene>
    <name type="ordered locus">Patl_0571</name>
</gene>
<accession>Q15YD8</accession>
<sequence length="281" mass="31899">MKLIIISGRSGSGKSIVLRSLEDLGYYCVDNIPVNLLPTLTHTVADEYDQVAVSIDVRNLPKDPNELVEILDYLPSTWEMTILYLDASDDVLIKRFSETRRLHPLSKQNKSLSGAIQAESQLLAPIAERADLYIDTDQLSIHQLAELVRERILGKKSSRLVLVFESFGFKHGIPKDADYVFDARFLPNPHWEPDLKPLTGLDSPVEIFLGSQPIVTKFIWQIQNLISTWLPHLERNNRSYVTIAIGCTGGQHRSVYVVEMLAKTFSTSHPDVQIRHRELNR</sequence>
<keyword id="KW-0067">ATP-binding</keyword>
<keyword id="KW-0342">GTP-binding</keyword>
<keyword id="KW-0547">Nucleotide-binding</keyword>
<name>Y571_PSEA6</name>
<reference key="1">
    <citation type="submission" date="2006-06" db="EMBL/GenBank/DDBJ databases">
        <title>Complete sequence of Pseudoalteromonas atlantica T6c.</title>
        <authorList>
            <consortium name="US DOE Joint Genome Institute"/>
            <person name="Copeland A."/>
            <person name="Lucas S."/>
            <person name="Lapidus A."/>
            <person name="Barry K."/>
            <person name="Detter J.C."/>
            <person name="Glavina del Rio T."/>
            <person name="Hammon N."/>
            <person name="Israni S."/>
            <person name="Dalin E."/>
            <person name="Tice H."/>
            <person name="Pitluck S."/>
            <person name="Saunders E."/>
            <person name="Brettin T."/>
            <person name="Bruce D."/>
            <person name="Han C."/>
            <person name="Tapia R."/>
            <person name="Gilna P."/>
            <person name="Schmutz J."/>
            <person name="Larimer F."/>
            <person name="Land M."/>
            <person name="Hauser L."/>
            <person name="Kyrpides N."/>
            <person name="Kim E."/>
            <person name="Karls A.C."/>
            <person name="Bartlett D."/>
            <person name="Higgins B.P."/>
            <person name="Richardson P."/>
        </authorList>
    </citation>
    <scope>NUCLEOTIDE SEQUENCE [LARGE SCALE GENOMIC DNA]</scope>
    <source>
        <strain>T6c / ATCC BAA-1087</strain>
    </source>
</reference>
<dbReference type="EMBL" id="CP000388">
    <property type="protein sequence ID" value="ABG39100.1"/>
    <property type="molecule type" value="Genomic_DNA"/>
</dbReference>
<dbReference type="SMR" id="Q15YD8"/>
<dbReference type="STRING" id="342610.Patl_0571"/>
<dbReference type="KEGG" id="pat:Patl_0571"/>
<dbReference type="eggNOG" id="COG1660">
    <property type="taxonomic scope" value="Bacteria"/>
</dbReference>
<dbReference type="HOGENOM" id="CLU_059558_1_1_6"/>
<dbReference type="OrthoDB" id="9784461at2"/>
<dbReference type="Proteomes" id="UP000001981">
    <property type="component" value="Chromosome"/>
</dbReference>
<dbReference type="GO" id="GO:0005524">
    <property type="term" value="F:ATP binding"/>
    <property type="evidence" value="ECO:0007669"/>
    <property type="project" value="UniProtKB-UniRule"/>
</dbReference>
<dbReference type="GO" id="GO:0005525">
    <property type="term" value="F:GTP binding"/>
    <property type="evidence" value="ECO:0007669"/>
    <property type="project" value="UniProtKB-UniRule"/>
</dbReference>
<dbReference type="Gene3D" id="3.40.50.300">
    <property type="entry name" value="P-loop containing nucleotide triphosphate hydrolases"/>
    <property type="match status" value="1"/>
</dbReference>
<dbReference type="HAMAP" id="MF_00636">
    <property type="entry name" value="RapZ_like"/>
    <property type="match status" value="1"/>
</dbReference>
<dbReference type="InterPro" id="IPR027417">
    <property type="entry name" value="P-loop_NTPase"/>
</dbReference>
<dbReference type="InterPro" id="IPR005337">
    <property type="entry name" value="RapZ-like"/>
</dbReference>
<dbReference type="InterPro" id="IPR053930">
    <property type="entry name" value="RapZ-like_N"/>
</dbReference>
<dbReference type="InterPro" id="IPR053931">
    <property type="entry name" value="RapZ_C"/>
</dbReference>
<dbReference type="NCBIfam" id="NF003828">
    <property type="entry name" value="PRK05416.1"/>
    <property type="match status" value="1"/>
</dbReference>
<dbReference type="PANTHER" id="PTHR30448">
    <property type="entry name" value="RNASE ADAPTER PROTEIN RAPZ"/>
    <property type="match status" value="1"/>
</dbReference>
<dbReference type="PANTHER" id="PTHR30448:SF0">
    <property type="entry name" value="RNASE ADAPTER PROTEIN RAPZ"/>
    <property type="match status" value="1"/>
</dbReference>
<dbReference type="Pfam" id="PF22740">
    <property type="entry name" value="PapZ_C"/>
    <property type="match status" value="1"/>
</dbReference>
<dbReference type="Pfam" id="PF03668">
    <property type="entry name" value="RapZ-like_N"/>
    <property type="match status" value="1"/>
</dbReference>
<dbReference type="PIRSF" id="PIRSF005052">
    <property type="entry name" value="P-loopkin"/>
    <property type="match status" value="1"/>
</dbReference>
<dbReference type="SUPFAM" id="SSF52540">
    <property type="entry name" value="P-loop containing nucleoside triphosphate hydrolases"/>
    <property type="match status" value="1"/>
</dbReference>
<proteinExistence type="inferred from homology"/>